<gene>
    <name evidence="2" type="primary">TFAM</name>
</gene>
<feature type="transit peptide" description="Mitochondrion" evidence="3">
    <location>
        <begin position="1"/>
        <end position="42"/>
    </location>
</feature>
<feature type="chain" id="PRO_0000269182" description="Transcription factor A, mitochondrial">
    <location>
        <begin position="43"/>
        <end position="246"/>
    </location>
</feature>
<feature type="DNA-binding region" description="HMG box 1" evidence="4">
    <location>
        <begin position="50"/>
        <end position="118"/>
    </location>
</feature>
<feature type="DNA-binding region" description="HMG box 2" evidence="4">
    <location>
        <begin position="155"/>
        <end position="219"/>
    </location>
</feature>
<feature type="site" description="Intercalates between bases and promotes DNA bending" evidence="1">
    <location>
        <position position="58"/>
    </location>
</feature>
<feature type="site" description="Intercalates between bases and promotes DNA bending" evidence="1">
    <location>
        <position position="182"/>
    </location>
</feature>
<feature type="modified residue" description="Phosphoserine; by PKA" evidence="2">
    <location>
        <position position="55"/>
    </location>
</feature>
<feature type="modified residue" description="Phosphoserine; by PKA" evidence="2">
    <location>
        <position position="56"/>
    </location>
</feature>
<feature type="modified residue" description="Phosphoserine; by PKA" evidence="2">
    <location>
        <position position="61"/>
    </location>
</feature>
<feature type="modified residue" description="Phosphothreonine" evidence="2">
    <location>
        <position position="122"/>
    </location>
</feature>
<feature type="modified residue" description="Phosphoserine; by PKA" evidence="2">
    <location>
        <position position="160"/>
    </location>
</feature>
<feature type="modified residue" description="Phosphoserine" evidence="2">
    <location>
        <position position="193"/>
    </location>
</feature>
<feature type="modified residue" description="Phosphoserine" evidence="2">
    <location>
        <position position="195"/>
    </location>
</feature>
<reference key="1">
    <citation type="journal article" date="2005" name="Gene">
        <title>Study of mitochondrial transcription factor A (Tfam) gene in the primate Presbytis cristata.</title>
        <authorList>
            <person name="D'Errico I."/>
            <person name="Reyes A."/>
            <person name="Dinardo M."/>
            <person name="Gadaleta G."/>
        </authorList>
    </citation>
    <scope>NUCLEOTIDE SEQUENCE [MRNA]</scope>
</reference>
<protein>
    <recommendedName>
        <fullName evidence="2">Transcription factor A, mitochondrial</fullName>
        <shortName>mtTFA</shortName>
    </recommendedName>
</protein>
<organism>
    <name type="scientific">Trachypithecus cristatus</name>
    <name type="common">Silvered leaf-monkey</name>
    <name type="synonym">Presbytis cristata</name>
    <dbReference type="NCBI Taxonomy" id="122765"/>
    <lineage>
        <taxon>Eukaryota</taxon>
        <taxon>Metazoa</taxon>
        <taxon>Chordata</taxon>
        <taxon>Craniata</taxon>
        <taxon>Vertebrata</taxon>
        <taxon>Euteleostomi</taxon>
        <taxon>Mammalia</taxon>
        <taxon>Eutheria</taxon>
        <taxon>Euarchontoglires</taxon>
        <taxon>Primates</taxon>
        <taxon>Haplorrhini</taxon>
        <taxon>Catarrhini</taxon>
        <taxon>Cercopithecidae</taxon>
        <taxon>Colobinae</taxon>
        <taxon>Trachypithecus</taxon>
    </lineage>
</organism>
<dbReference type="EMBL" id="AJ830015">
    <property type="protein sequence ID" value="CAH25649.1"/>
    <property type="molecule type" value="mRNA"/>
</dbReference>
<dbReference type="SMR" id="Q4H0T5"/>
<dbReference type="GO" id="GO:0042645">
    <property type="term" value="C:mitochondrial nucleoid"/>
    <property type="evidence" value="ECO:0000250"/>
    <property type="project" value="UniProtKB"/>
</dbReference>
<dbReference type="GO" id="GO:0003682">
    <property type="term" value="F:chromatin binding"/>
    <property type="evidence" value="ECO:0000250"/>
    <property type="project" value="UniProtKB"/>
</dbReference>
<dbReference type="GO" id="GO:0001018">
    <property type="term" value="F:mitochondrial promoter sequence-specific DNA binding"/>
    <property type="evidence" value="ECO:0000250"/>
    <property type="project" value="UniProtKB"/>
</dbReference>
<dbReference type="GO" id="GO:0034246">
    <property type="term" value="F:mitochondrial transcription factor activity"/>
    <property type="evidence" value="ECO:0000250"/>
    <property type="project" value="UniProtKB"/>
</dbReference>
<dbReference type="GO" id="GO:0006390">
    <property type="term" value="P:mitochondrial transcription"/>
    <property type="evidence" value="ECO:0000250"/>
    <property type="project" value="UniProtKB"/>
</dbReference>
<dbReference type="GO" id="GO:0045893">
    <property type="term" value="P:positive regulation of DNA-templated transcription"/>
    <property type="evidence" value="ECO:0000250"/>
    <property type="project" value="UniProtKB"/>
</dbReference>
<dbReference type="GO" id="GO:0006357">
    <property type="term" value="P:regulation of transcription by RNA polymerase II"/>
    <property type="evidence" value="ECO:0007669"/>
    <property type="project" value="TreeGrafter"/>
</dbReference>
<dbReference type="GO" id="GO:0006391">
    <property type="term" value="P:transcription initiation at mitochondrial promoter"/>
    <property type="evidence" value="ECO:0000250"/>
    <property type="project" value="UniProtKB"/>
</dbReference>
<dbReference type="CDD" id="cd21986">
    <property type="entry name" value="HMG-box_TFAM_rpt1"/>
    <property type="match status" value="1"/>
</dbReference>
<dbReference type="CDD" id="cd21987">
    <property type="entry name" value="HMG-box_TFAM_rpt2"/>
    <property type="match status" value="1"/>
</dbReference>
<dbReference type="FunFam" id="1.10.30.10:FF:000043">
    <property type="entry name" value="Transcription factor A, mitochondrial"/>
    <property type="match status" value="1"/>
</dbReference>
<dbReference type="FunFam" id="1.10.30.10:FF:000045">
    <property type="entry name" value="Transcription factor A, mitochondrial"/>
    <property type="match status" value="1"/>
</dbReference>
<dbReference type="Gene3D" id="1.10.30.10">
    <property type="entry name" value="High mobility group box domain"/>
    <property type="match status" value="2"/>
</dbReference>
<dbReference type="InterPro" id="IPR009071">
    <property type="entry name" value="HMG_box_dom"/>
</dbReference>
<dbReference type="InterPro" id="IPR036910">
    <property type="entry name" value="HMG_box_dom_sf"/>
</dbReference>
<dbReference type="InterPro" id="IPR050342">
    <property type="entry name" value="HMGB"/>
</dbReference>
<dbReference type="PANTHER" id="PTHR48112">
    <property type="entry name" value="HIGH MOBILITY GROUP PROTEIN DSP1"/>
    <property type="match status" value="1"/>
</dbReference>
<dbReference type="PANTHER" id="PTHR48112:SF36">
    <property type="entry name" value="TRANSCRIPTION FACTOR A, MITOCHONDRIAL"/>
    <property type="match status" value="1"/>
</dbReference>
<dbReference type="Pfam" id="PF00505">
    <property type="entry name" value="HMG_box"/>
    <property type="match status" value="1"/>
</dbReference>
<dbReference type="Pfam" id="PF09011">
    <property type="entry name" value="HMG_box_2"/>
    <property type="match status" value="1"/>
</dbReference>
<dbReference type="SMART" id="SM00398">
    <property type="entry name" value="HMG"/>
    <property type="match status" value="2"/>
</dbReference>
<dbReference type="SUPFAM" id="SSF47095">
    <property type="entry name" value="HMG-box"/>
    <property type="match status" value="2"/>
</dbReference>
<dbReference type="PROSITE" id="PS50118">
    <property type="entry name" value="HMG_BOX_2"/>
    <property type="match status" value="2"/>
</dbReference>
<sequence length="246" mass="28898">MAFLRSMWGVLSALGRSGAAVCIGCGSRLRSPFSFVYLPKCFSSVLASCPKKPVSSYLRFSKEQLPIFKAENPDAKPTELIRRIAKLWRELPDSKKKIYQDAYRADWQVYKEKISRFKEQLTPSQITSLEKEIMDKHLKRKAMTKRKELTQLGKPKRPRSAYNVYVAEKFQEAKGDSPQEKLKTVKENWKNLSDSEKELYIRLAKEDEIRYHNEMKSWEEQMIEAGRKDLLRRTIKQRQKYGAEEY</sequence>
<name>TFAM_TRACR</name>
<keyword id="KW-0010">Activator</keyword>
<keyword id="KW-0238">DNA-binding</keyword>
<keyword id="KW-0496">Mitochondrion</keyword>
<keyword id="KW-1135">Mitochondrion nucleoid</keyword>
<keyword id="KW-0597">Phosphoprotein</keyword>
<keyword id="KW-0677">Repeat</keyword>
<keyword id="KW-0804">Transcription</keyword>
<keyword id="KW-0805">Transcription regulation</keyword>
<keyword id="KW-0809">Transit peptide</keyword>
<accession>Q4H0T5</accession>
<comment type="function">
    <text evidence="2">Binds to the mitochondrial light strand promoter and functions in mitochondrial transcription regulation. Component of the mitochondrial transcription initiation complex, composed at least of TFB2M, TFAM and POLRMT that is required for basal transcription of mitochondrial DNA. In this complex, TFAM recruits POLRMT to a specific promoter whereas TFB2M induces structural changes in POLRMT to enable promoter opening and trapping of the DNA non-template strand. Required for accurate and efficient promoter recognition by the mitochondrial RNA polymerase. Promotes transcription initiation from the HSP1 and the light strand promoter by binding immediately upstream of transcriptional start sites. Is able to unwind DNA. Bends the mitochondrial light strand promoter DNA into a U-turn shape via its HMG boxes. Required for maintenance of normal levels of mitochondrial DNA. May play a role in organizing and compacting mitochondrial DNA.</text>
</comment>
<comment type="subunit">
    <text evidence="2">Monomer; binds DNA as a monomer. Homodimer. Component of the mitochondrial transcription initiation complex, composed at least of TFB2M, TFAM and POLRMT. In this complex TFAM recruits POLRMT to the promoter whereas TFB2M induces structural changes in POLRMT to enable promoter opening and trapping of the DNA non-template strand. Upon metabolic stress, forms a complex composed of FOXO3, SIRT3, TFAM and POLRMT. Interacts with TFB1M and TFB2M. Interacts with CLPX; this enhances DNA-binding.</text>
</comment>
<comment type="subcellular location">
    <subcellularLocation>
        <location>Mitochondrion</location>
    </subcellularLocation>
    <subcellularLocation>
        <location evidence="1">Mitochondrion matrix</location>
        <location evidence="1">Mitochondrion nucleoid</location>
    </subcellularLocation>
</comment>
<comment type="domain">
    <text evidence="1">Binds DNA via its HMG boxes. When bound to the mitochondrial light strand promoter, bends DNA into a U-turn shape, each HMG box bending the DNA by 90 degrees (By similarity).</text>
</comment>
<comment type="PTM">
    <text evidence="1">Phosphorylation by PKA within the HMG box 1 impairs DNA binding and promotes degradation by the AAA+ Lon protease.</text>
</comment>
<proteinExistence type="evidence at transcript level"/>
<evidence type="ECO:0000250" key="1"/>
<evidence type="ECO:0000250" key="2">
    <source>
        <dbReference type="UniProtKB" id="Q00059"/>
    </source>
</evidence>
<evidence type="ECO:0000255" key="3"/>
<evidence type="ECO:0000255" key="4">
    <source>
        <dbReference type="PROSITE-ProRule" id="PRU00267"/>
    </source>
</evidence>